<geneLocation type="mitochondrion"/>
<dbReference type="EC" id="7.1.1.9"/>
<dbReference type="EMBL" id="M64891">
    <property type="protein sequence ID" value="AAB01457.1"/>
    <property type="molecule type" value="Genomic_DNA"/>
</dbReference>
<dbReference type="UniPathway" id="UPA00705"/>
<dbReference type="GO" id="GO:0005743">
    <property type="term" value="C:mitochondrial inner membrane"/>
    <property type="evidence" value="ECO:0007669"/>
    <property type="project" value="UniProtKB-SubCell"/>
</dbReference>
<dbReference type="GO" id="GO:0045277">
    <property type="term" value="C:respiratory chain complex IV"/>
    <property type="evidence" value="ECO:0000250"/>
    <property type="project" value="UniProtKB"/>
</dbReference>
<dbReference type="GO" id="GO:0004129">
    <property type="term" value="F:cytochrome-c oxidase activity"/>
    <property type="evidence" value="ECO:0007669"/>
    <property type="project" value="UniProtKB-EC"/>
</dbReference>
<dbReference type="GO" id="GO:0020037">
    <property type="term" value="F:heme binding"/>
    <property type="evidence" value="ECO:0007669"/>
    <property type="project" value="InterPro"/>
</dbReference>
<dbReference type="GO" id="GO:0046872">
    <property type="term" value="F:metal ion binding"/>
    <property type="evidence" value="ECO:0007669"/>
    <property type="project" value="UniProtKB-KW"/>
</dbReference>
<dbReference type="GO" id="GO:0015990">
    <property type="term" value="P:electron transport coupled proton transport"/>
    <property type="evidence" value="ECO:0007669"/>
    <property type="project" value="TreeGrafter"/>
</dbReference>
<dbReference type="GO" id="GO:0006123">
    <property type="term" value="P:mitochondrial electron transport, cytochrome c to oxygen"/>
    <property type="evidence" value="ECO:0007669"/>
    <property type="project" value="TreeGrafter"/>
</dbReference>
<dbReference type="Gene3D" id="1.20.210.10">
    <property type="entry name" value="Cytochrome c oxidase-like, subunit I domain"/>
    <property type="match status" value="1"/>
</dbReference>
<dbReference type="InterPro" id="IPR023616">
    <property type="entry name" value="Cyt_c_oxase-like_su1_dom"/>
</dbReference>
<dbReference type="InterPro" id="IPR036927">
    <property type="entry name" value="Cyt_c_oxase-like_su1_sf"/>
</dbReference>
<dbReference type="InterPro" id="IPR000883">
    <property type="entry name" value="Cyt_C_Oxase_1"/>
</dbReference>
<dbReference type="InterPro" id="IPR023615">
    <property type="entry name" value="Cyt_c_Oxase_su1_BS"/>
</dbReference>
<dbReference type="PANTHER" id="PTHR10422">
    <property type="entry name" value="CYTOCHROME C OXIDASE SUBUNIT 1"/>
    <property type="match status" value="1"/>
</dbReference>
<dbReference type="PANTHER" id="PTHR10422:SF18">
    <property type="entry name" value="CYTOCHROME C OXIDASE SUBUNIT 1"/>
    <property type="match status" value="1"/>
</dbReference>
<dbReference type="Pfam" id="PF00115">
    <property type="entry name" value="COX1"/>
    <property type="match status" value="1"/>
</dbReference>
<dbReference type="PRINTS" id="PR01165">
    <property type="entry name" value="CYCOXIDASEI"/>
</dbReference>
<dbReference type="SUPFAM" id="SSF81442">
    <property type="entry name" value="Cytochrome c oxidase subunit I-like"/>
    <property type="match status" value="1"/>
</dbReference>
<dbReference type="PROSITE" id="PS50855">
    <property type="entry name" value="COX1"/>
    <property type="match status" value="1"/>
</dbReference>
<dbReference type="PROSITE" id="PS00077">
    <property type="entry name" value="COX1_CUB"/>
    <property type="match status" value="1"/>
</dbReference>
<accession>P29645</accession>
<sequence length="152" mass="17010">YEHLFWFFGHPEVYILILPGFGMISHIVAYYAGKKEPFGCMGMIWAMMAIGLLGFIVWAHHMFTVGMDVDTRAYFTSATMVIAIPTGVKVFSWLATLHGGSLKWETXXXXALGFIFLFTVGGLTGIVLANSSLDIMLHDTYYVVAHFHYVLS</sequence>
<protein>
    <recommendedName>
        <fullName>Cytochrome c oxidase subunit 1</fullName>
        <ecNumber>7.1.1.9</ecNumber>
    </recommendedName>
    <alternativeName>
        <fullName>Cytochrome c oxidase polypeptide I</fullName>
    </alternativeName>
</protein>
<keyword id="KW-0186">Copper</keyword>
<keyword id="KW-0249">Electron transport</keyword>
<keyword id="KW-0349">Heme</keyword>
<keyword id="KW-0408">Iron</keyword>
<keyword id="KW-0460">Magnesium</keyword>
<keyword id="KW-0472">Membrane</keyword>
<keyword id="KW-0479">Metal-binding</keyword>
<keyword id="KW-0496">Mitochondrion</keyword>
<keyword id="KW-0999">Mitochondrion inner membrane</keyword>
<keyword id="KW-0679">Respiratory chain</keyword>
<keyword id="KW-0915">Sodium</keyword>
<keyword id="KW-1278">Translocase</keyword>
<keyword id="KW-0812">Transmembrane</keyword>
<keyword id="KW-1133">Transmembrane helix</keyword>
<keyword id="KW-0813">Transport</keyword>
<comment type="function">
    <text evidence="3">Component of the cytochrome c oxidase, the last enzyme in the mitochondrial electron transport chain which drives oxidative phosphorylation. The respiratory chain contains 3 multisubunit complexes succinate dehydrogenase (complex II, CII), ubiquinol-cytochrome c oxidoreductase (cytochrome b-c1 complex, complex III, CIII) and cytochrome c oxidase (complex IV, CIV), that cooperate to transfer electrons derived from NADH and succinate to molecular oxygen, creating an electrochemical gradient over the inner membrane that drives transmembrane transport and the ATP synthase. Cytochrome c oxidase is the component of the respiratory chain that catalyzes the reduction of oxygen to water. Electrons originating from reduced cytochrome c in the intermembrane space (IMS) are transferred via the dinuclear copper A center (CU(A)) of subunit 2 and heme A of subunit 1 to the active site in subunit 1, a binuclear center (BNC) formed by heme A3 and copper B (CU(B)). The BNC reduces molecular oxygen to 2 water molecules using 4 electrons from cytochrome c in the IMS and 4 protons from the mitochondrial matrix.</text>
</comment>
<comment type="catalytic activity">
    <reaction evidence="3">
        <text>4 Fe(II)-[cytochrome c] + O2 + 8 H(+)(in) = 4 Fe(III)-[cytochrome c] + 2 H2O + 4 H(+)(out)</text>
        <dbReference type="Rhea" id="RHEA:11436"/>
        <dbReference type="Rhea" id="RHEA-COMP:10350"/>
        <dbReference type="Rhea" id="RHEA-COMP:14399"/>
        <dbReference type="ChEBI" id="CHEBI:15377"/>
        <dbReference type="ChEBI" id="CHEBI:15378"/>
        <dbReference type="ChEBI" id="CHEBI:15379"/>
        <dbReference type="ChEBI" id="CHEBI:29033"/>
        <dbReference type="ChEBI" id="CHEBI:29034"/>
        <dbReference type="EC" id="7.1.1.9"/>
    </reaction>
    <physiologicalReaction direction="left-to-right" evidence="3">
        <dbReference type="Rhea" id="RHEA:11437"/>
    </physiologicalReaction>
</comment>
<comment type="cofactor">
    <cofactor evidence="2">
        <name>heme</name>
        <dbReference type="ChEBI" id="CHEBI:30413"/>
    </cofactor>
    <text evidence="2">Binds 2 heme A groups non-covalently per subunit.</text>
</comment>
<comment type="cofactor">
    <cofactor evidence="2">
        <name>Cu cation</name>
        <dbReference type="ChEBI" id="CHEBI:23378"/>
    </cofactor>
    <text evidence="2">Binds a copper B center.</text>
</comment>
<comment type="pathway">
    <text evidence="3">Energy metabolism; oxidative phosphorylation.</text>
</comment>
<comment type="subunit">
    <text evidence="1 2">Component of the cytochrome c oxidase (complex IV, CIV), a multisubunit enzyme composed of 14 subunits. The complex is composed of a catalytic core of 3 subunits MT-CO1, MT-CO2 and MT-CO3, encoded in the mitochondrial DNA, and 11 supernumerary subunits COX4I, COX5A, COX5B, COX6A, COX6B, COX6C, COX7A, COX7B, COX7C, COX8 and NDUFA4, which are encoded in the nuclear genome. The complex exists as a monomer or a dimer and forms supercomplexes (SCs) in the inner mitochondrial membrane with NADH-ubiquinone oxidoreductase (complex I, CI) and ubiquinol-cytochrome c oxidoreductase (cytochrome b-c1 complex, complex III, CIII), resulting in different assemblies (supercomplex SCI(1)III(2)IV(1) and megacomplex MCI(2)III(2)IV(2)) (By similarity). As a newly synthesized protein, rapidly incorporates into a multi-subunit assembly intermediate in the inner membrane, called MITRAC (mitochondrial translation regulation assembly intermediate of cytochrome c oxidase) complex, whose core components are COA3/MITRAC12 and COX14. Within the MITRAC complex, interacts with COA3 and with SMIM20/MITRAC7; the interaction with SMIM20 stabilizes the newly synthesized MT-CO1 and prevents its premature turnover. Interacts with TMEM177 in a COX20-dependent manner (By similarity).</text>
</comment>
<comment type="subcellular location">
    <subcellularLocation>
        <location evidence="2">Mitochondrion inner membrane</location>
        <topology evidence="2">Multi-pass membrane protein</topology>
    </subcellularLocation>
</comment>
<comment type="similarity">
    <text evidence="4">Belongs to the heme-copper respiratory oxidase family.</text>
</comment>
<proteinExistence type="inferred from homology"/>
<reference key="1">
    <citation type="journal article" date="1991" name="Mol. Biol. Evol.">
        <title>Phylogenetic relationships of neopterygian fishes, inferred from mitochondrial DNA sequences.</title>
        <authorList>
            <person name="Normark B.B."/>
            <person name="McCune A.R."/>
            <person name="Harrison R.G."/>
        </authorList>
    </citation>
    <scope>NUCLEOTIDE SEQUENCE [GENOMIC DNA]</scope>
</reference>
<name>COX1_GEOSD</name>
<organism>
    <name type="scientific">Geophagus steindachneri</name>
    <name type="common">Red hump earth eater</name>
    <dbReference type="NCBI Taxonomy" id="13074"/>
    <lineage>
        <taxon>Eukaryota</taxon>
        <taxon>Metazoa</taxon>
        <taxon>Chordata</taxon>
        <taxon>Craniata</taxon>
        <taxon>Vertebrata</taxon>
        <taxon>Euteleostomi</taxon>
        <taxon>Actinopterygii</taxon>
        <taxon>Neopterygii</taxon>
        <taxon>Teleostei</taxon>
        <taxon>Neoteleostei</taxon>
        <taxon>Acanthomorphata</taxon>
        <taxon>Ovalentaria</taxon>
        <taxon>Cichlomorphae</taxon>
        <taxon>Cichliformes</taxon>
        <taxon>Cichlidae</taxon>
        <taxon>New World cichlids</taxon>
        <taxon>Geophaginae</taxon>
        <taxon>Geophagini</taxon>
        <taxon>Geophagus</taxon>
    </lineage>
</organism>
<feature type="chain" id="PRO_0000183337" description="Cytochrome c oxidase subunit 1">
    <location>
        <begin position="1" status="less than"/>
        <end position="152" status="greater than"/>
    </location>
</feature>
<feature type="transmembrane region" description="Helical; Name=VI" evidence="2">
    <location>
        <begin position="1" status="less than"/>
        <end position="31"/>
    </location>
</feature>
<feature type="topological domain" description="Mitochondrial matrix" evidence="2">
    <location>
        <begin position="32"/>
        <end position="39"/>
    </location>
</feature>
<feature type="transmembrane region" description="Helical; Name=VII" evidence="2">
    <location>
        <begin position="40"/>
        <end position="56"/>
    </location>
</feature>
<feature type="topological domain" description="Mitochondrial intermembrane" evidence="2">
    <location>
        <begin position="57"/>
        <end position="68"/>
    </location>
</feature>
<feature type="transmembrane region" description="Helical; Name=VIII" evidence="2">
    <location>
        <begin position="69"/>
        <end position="97"/>
    </location>
</feature>
<feature type="topological domain" description="Mitochondrial matrix" evidence="2">
    <location>
        <begin position="98"/>
        <end position="105"/>
    </location>
</feature>
<feature type="transmembrane region" description="Helical; Name=IX" evidence="2">
    <location>
        <begin position="106"/>
        <end position="127"/>
    </location>
</feature>
<feature type="topological domain" description="Mitochondrial intermembrane" evidence="2">
    <location>
        <begin position="128"/>
        <end position="140"/>
    </location>
</feature>
<feature type="transmembrane region" description="Helical; Name=X" evidence="2">
    <location>
        <begin position="141"/>
        <end position="152" status="greater than"/>
    </location>
</feature>
<feature type="binding site" evidence="2">
    <location>
        <position position="10"/>
    </location>
    <ligand>
        <name>Cu cation</name>
        <dbReference type="ChEBI" id="CHEBI:23378"/>
        <label>B</label>
    </ligand>
</feature>
<feature type="binding site" evidence="2">
    <location>
        <position position="14"/>
    </location>
    <ligand>
        <name>O2</name>
        <dbReference type="ChEBI" id="CHEBI:15379"/>
    </ligand>
</feature>
<feature type="binding site" evidence="2">
    <location>
        <position position="60"/>
    </location>
    <ligand>
        <name>Cu cation</name>
        <dbReference type="ChEBI" id="CHEBI:23378"/>
        <label>B</label>
    </ligand>
</feature>
<feature type="binding site" evidence="2">
    <location>
        <position position="61"/>
    </location>
    <ligand>
        <name>Cu cation</name>
        <dbReference type="ChEBI" id="CHEBI:23378"/>
        <label>B</label>
    </ligand>
</feature>
<feature type="binding site" evidence="2">
    <location>
        <position position="138"/>
    </location>
    <ligand>
        <name>Mg(2+)</name>
        <dbReference type="ChEBI" id="CHEBI:18420"/>
        <note>ligand shared with MT-CO2</note>
    </ligand>
</feature>
<feature type="binding site" evidence="2">
    <location>
        <position position="139"/>
    </location>
    <ligand>
        <name>Mg(2+)</name>
        <dbReference type="ChEBI" id="CHEBI:18420"/>
        <note>ligand shared with MT-CO2</note>
    </ligand>
</feature>
<feature type="binding site" description="axial binding residue" evidence="2">
    <location>
        <position position="146"/>
    </location>
    <ligand>
        <name>heme a3</name>
        <dbReference type="ChEBI" id="CHEBI:83282"/>
        <note>high-spin</note>
    </ligand>
    <ligandPart>
        <name>Fe</name>
        <dbReference type="ChEBI" id="CHEBI:18248"/>
    </ligandPart>
</feature>
<feature type="binding site" description="axial binding residue" evidence="2">
    <location>
        <position position="148"/>
    </location>
    <ligand>
        <name>Fe(II)-heme a</name>
        <dbReference type="ChEBI" id="CHEBI:61715"/>
        <note>low-spin</note>
    </ligand>
    <ligandPart>
        <name>Fe</name>
        <dbReference type="ChEBI" id="CHEBI:18248"/>
    </ligandPart>
</feature>
<feature type="cross-link" description="1'-histidyl-3'-tyrosine (His-Tyr)" evidence="2">
    <location>
        <begin position="10"/>
        <end position="14"/>
    </location>
</feature>
<feature type="non-terminal residue">
    <location>
        <position position="1"/>
    </location>
</feature>
<feature type="non-terminal residue">
    <location>
        <position position="152"/>
    </location>
</feature>
<evidence type="ECO:0000250" key="1">
    <source>
        <dbReference type="UniProtKB" id="P00395"/>
    </source>
</evidence>
<evidence type="ECO:0000250" key="2">
    <source>
        <dbReference type="UniProtKB" id="P00396"/>
    </source>
</evidence>
<evidence type="ECO:0000250" key="3">
    <source>
        <dbReference type="UniProtKB" id="P00401"/>
    </source>
</evidence>
<evidence type="ECO:0000305" key="4"/>
<gene>
    <name type="primary">mt-co1</name>
    <name type="synonym">coi</name>
    <name type="synonym">coxi</name>
    <name type="synonym">mtco1</name>
</gene>